<comment type="function">
    <text evidence="1">Quinone reductase that provides resistance to thiol-specific stress caused by electrophilic quinones.</text>
</comment>
<comment type="function">
    <text evidence="1">Also exhibits azoreductase activity. Catalyzes the reductive cleavage of the azo bond in aromatic azo compounds to the corresponding amines.</text>
</comment>
<comment type="catalytic activity">
    <reaction evidence="1">
        <text>2 a quinone + NADH + H(+) = 2 a 1,4-benzosemiquinone + NAD(+)</text>
        <dbReference type="Rhea" id="RHEA:65952"/>
        <dbReference type="ChEBI" id="CHEBI:15378"/>
        <dbReference type="ChEBI" id="CHEBI:57540"/>
        <dbReference type="ChEBI" id="CHEBI:57945"/>
        <dbReference type="ChEBI" id="CHEBI:132124"/>
        <dbReference type="ChEBI" id="CHEBI:134225"/>
    </reaction>
</comment>
<comment type="catalytic activity">
    <reaction evidence="1">
        <text>N,N-dimethyl-1,4-phenylenediamine + anthranilate + 2 NAD(+) = 2-(4-dimethylaminophenyl)diazenylbenzoate + 2 NADH + 2 H(+)</text>
        <dbReference type="Rhea" id="RHEA:55872"/>
        <dbReference type="ChEBI" id="CHEBI:15378"/>
        <dbReference type="ChEBI" id="CHEBI:15783"/>
        <dbReference type="ChEBI" id="CHEBI:16567"/>
        <dbReference type="ChEBI" id="CHEBI:57540"/>
        <dbReference type="ChEBI" id="CHEBI:57945"/>
        <dbReference type="ChEBI" id="CHEBI:71579"/>
        <dbReference type="EC" id="1.7.1.17"/>
    </reaction>
</comment>
<comment type="cofactor">
    <cofactor evidence="1">
        <name>FMN</name>
        <dbReference type="ChEBI" id="CHEBI:58210"/>
    </cofactor>
    <text evidence="1">Binds 1 FMN per subunit.</text>
</comment>
<comment type="subunit">
    <text evidence="1">Homodimer.</text>
</comment>
<comment type="similarity">
    <text evidence="1">Belongs to the azoreductase type 1 family.</text>
</comment>
<dbReference type="EC" id="1.6.5.-" evidence="1"/>
<dbReference type="EC" id="1.7.1.17" evidence="1"/>
<dbReference type="EMBL" id="CP001103">
    <property type="protein sequence ID" value="AEA98870.1"/>
    <property type="molecule type" value="Genomic_DNA"/>
</dbReference>
<dbReference type="RefSeq" id="WP_012519162.1">
    <property type="nucleotide sequence ID" value="NC_011138.3"/>
</dbReference>
<dbReference type="SMR" id="B4RTK8"/>
<dbReference type="GeneID" id="56342650"/>
<dbReference type="KEGG" id="amc:MADE_1013680"/>
<dbReference type="HOGENOM" id="CLU_088964_0_0_6"/>
<dbReference type="Proteomes" id="UP000001870">
    <property type="component" value="Chromosome"/>
</dbReference>
<dbReference type="GO" id="GO:0009055">
    <property type="term" value="F:electron transfer activity"/>
    <property type="evidence" value="ECO:0007669"/>
    <property type="project" value="UniProtKB-UniRule"/>
</dbReference>
<dbReference type="GO" id="GO:0010181">
    <property type="term" value="F:FMN binding"/>
    <property type="evidence" value="ECO:0007669"/>
    <property type="project" value="UniProtKB-UniRule"/>
</dbReference>
<dbReference type="GO" id="GO:0016652">
    <property type="term" value="F:oxidoreductase activity, acting on NAD(P)H as acceptor"/>
    <property type="evidence" value="ECO:0007669"/>
    <property type="project" value="UniProtKB-UniRule"/>
</dbReference>
<dbReference type="GO" id="GO:0016655">
    <property type="term" value="F:oxidoreductase activity, acting on NAD(P)H, quinone or similar compound as acceptor"/>
    <property type="evidence" value="ECO:0007669"/>
    <property type="project" value="InterPro"/>
</dbReference>
<dbReference type="Gene3D" id="3.40.50.360">
    <property type="match status" value="1"/>
</dbReference>
<dbReference type="HAMAP" id="MF_01216">
    <property type="entry name" value="Azoreductase_type1"/>
    <property type="match status" value="1"/>
</dbReference>
<dbReference type="InterPro" id="IPR003680">
    <property type="entry name" value="Flavodoxin_fold"/>
</dbReference>
<dbReference type="InterPro" id="IPR029039">
    <property type="entry name" value="Flavoprotein-like_sf"/>
</dbReference>
<dbReference type="InterPro" id="IPR050104">
    <property type="entry name" value="FMN-dep_NADH:Q_OxRdtase_AzoR1"/>
</dbReference>
<dbReference type="InterPro" id="IPR023048">
    <property type="entry name" value="NADH:quinone_OxRdtase_FMN_depd"/>
</dbReference>
<dbReference type="PANTHER" id="PTHR43741">
    <property type="entry name" value="FMN-DEPENDENT NADH-AZOREDUCTASE 1"/>
    <property type="match status" value="1"/>
</dbReference>
<dbReference type="PANTHER" id="PTHR43741:SF2">
    <property type="entry name" value="FMN-DEPENDENT NADH:QUINONE OXIDOREDUCTASE"/>
    <property type="match status" value="1"/>
</dbReference>
<dbReference type="Pfam" id="PF02525">
    <property type="entry name" value="Flavodoxin_2"/>
    <property type="match status" value="1"/>
</dbReference>
<dbReference type="SUPFAM" id="SSF52218">
    <property type="entry name" value="Flavoproteins"/>
    <property type="match status" value="1"/>
</dbReference>
<name>AZOR_ALTMD</name>
<accession>B4RTK8</accession>
<accession>F2G9Q0</accession>
<sequence length="200" mass="21766">MKTVLAIFSSLNGTEGNSSKLANEYLLKIENDDSVRINRVDVASLALPHLTGEEMQAWMTDASERNESQHALAKISDNIVEAVKAADEIVLAVPMYNFGIPSSLKAYFDRIARAGITFKYTETGPVGLLENKSATVFAARGGVYAGSDFDTQTPYLKHFLNFIGISDVNFVYAEGLNMGEEQANSAFADANEKIIELTKG</sequence>
<feature type="chain" id="PRO_1000138963" description="FMN-dependent NADH:quinone oxidoreductase">
    <location>
        <begin position="1"/>
        <end position="200"/>
    </location>
</feature>
<feature type="binding site" evidence="1">
    <location>
        <position position="10"/>
    </location>
    <ligand>
        <name>FMN</name>
        <dbReference type="ChEBI" id="CHEBI:58210"/>
    </ligand>
</feature>
<feature type="binding site" evidence="1">
    <location>
        <begin position="95"/>
        <end position="98"/>
    </location>
    <ligand>
        <name>FMN</name>
        <dbReference type="ChEBI" id="CHEBI:58210"/>
    </ligand>
</feature>
<protein>
    <recommendedName>
        <fullName evidence="1">FMN-dependent NADH:quinone oxidoreductase</fullName>
        <ecNumber evidence="1">1.6.5.-</ecNumber>
    </recommendedName>
    <alternativeName>
        <fullName evidence="1">Azo-dye reductase</fullName>
    </alternativeName>
    <alternativeName>
        <fullName evidence="1">FMN-dependent NADH-azo compound oxidoreductase</fullName>
    </alternativeName>
    <alternativeName>
        <fullName evidence="1">FMN-dependent NADH-azoreductase</fullName>
        <ecNumber evidence="1">1.7.1.17</ecNumber>
    </alternativeName>
</protein>
<reference key="1">
    <citation type="journal article" date="2008" name="ISME J.">
        <title>Comparative genomics of two ecotypes of the marine planktonic copiotroph Alteromonas macleodii suggests alternative lifestyles associated with different kinds of particulate organic matter.</title>
        <authorList>
            <person name="Ivars-Martinez E."/>
            <person name="Martin-Cuadrado A.-B."/>
            <person name="D'Auria G."/>
            <person name="Mira A."/>
            <person name="Ferriera S."/>
            <person name="Johnson J."/>
            <person name="Friedman R."/>
            <person name="Rodriguez-Valera F."/>
        </authorList>
    </citation>
    <scope>NUCLEOTIDE SEQUENCE [LARGE SCALE GENOMIC DNA]</scope>
    <source>
        <strain>DSM 17117 / CIP 110805 / LMG 28347 / Deep ecotype</strain>
    </source>
</reference>
<organism>
    <name type="scientific">Alteromonas mediterranea (strain DSM 17117 / CIP 110805 / LMG 28347 / Deep ecotype)</name>
    <dbReference type="NCBI Taxonomy" id="1774373"/>
    <lineage>
        <taxon>Bacteria</taxon>
        <taxon>Pseudomonadati</taxon>
        <taxon>Pseudomonadota</taxon>
        <taxon>Gammaproteobacteria</taxon>
        <taxon>Alteromonadales</taxon>
        <taxon>Alteromonadaceae</taxon>
        <taxon>Alteromonas/Salinimonas group</taxon>
        <taxon>Alteromonas</taxon>
    </lineage>
</organism>
<keyword id="KW-0285">Flavoprotein</keyword>
<keyword id="KW-0288">FMN</keyword>
<keyword id="KW-0520">NAD</keyword>
<keyword id="KW-0560">Oxidoreductase</keyword>
<proteinExistence type="inferred from homology"/>
<gene>
    <name evidence="1" type="primary">azoR</name>
    <name type="ordered locus">MADE_1013680</name>
</gene>
<evidence type="ECO:0000255" key="1">
    <source>
        <dbReference type="HAMAP-Rule" id="MF_01216"/>
    </source>
</evidence>